<dbReference type="EC" id="2.7.2.1" evidence="1"/>
<dbReference type="EMBL" id="BX572607">
    <property type="protein sequence ID" value="CAE30006.1"/>
    <property type="molecule type" value="Genomic_DNA"/>
</dbReference>
<dbReference type="RefSeq" id="WP_011160098.1">
    <property type="nucleotide sequence ID" value="NZ_CP116810.1"/>
</dbReference>
<dbReference type="SMR" id="Q6N143"/>
<dbReference type="STRING" id="258594.RPA4566"/>
<dbReference type="GeneID" id="66895717"/>
<dbReference type="eggNOG" id="COG0282">
    <property type="taxonomic scope" value="Bacteria"/>
</dbReference>
<dbReference type="HOGENOM" id="CLU_020352_0_0_5"/>
<dbReference type="PhylomeDB" id="Q6N143"/>
<dbReference type="UniPathway" id="UPA00340">
    <property type="reaction ID" value="UER00458"/>
</dbReference>
<dbReference type="GO" id="GO:0005829">
    <property type="term" value="C:cytosol"/>
    <property type="evidence" value="ECO:0007669"/>
    <property type="project" value="TreeGrafter"/>
</dbReference>
<dbReference type="GO" id="GO:0008776">
    <property type="term" value="F:acetate kinase activity"/>
    <property type="evidence" value="ECO:0007669"/>
    <property type="project" value="UniProtKB-UniRule"/>
</dbReference>
<dbReference type="GO" id="GO:0005524">
    <property type="term" value="F:ATP binding"/>
    <property type="evidence" value="ECO:0007669"/>
    <property type="project" value="UniProtKB-KW"/>
</dbReference>
<dbReference type="GO" id="GO:0000287">
    <property type="term" value="F:magnesium ion binding"/>
    <property type="evidence" value="ECO:0007669"/>
    <property type="project" value="UniProtKB-UniRule"/>
</dbReference>
<dbReference type="GO" id="GO:0006083">
    <property type="term" value="P:acetate metabolic process"/>
    <property type="evidence" value="ECO:0007669"/>
    <property type="project" value="TreeGrafter"/>
</dbReference>
<dbReference type="GO" id="GO:0006085">
    <property type="term" value="P:acetyl-CoA biosynthetic process"/>
    <property type="evidence" value="ECO:0007669"/>
    <property type="project" value="UniProtKB-UniRule"/>
</dbReference>
<dbReference type="Gene3D" id="3.30.420.40">
    <property type="match status" value="2"/>
</dbReference>
<dbReference type="HAMAP" id="MF_00020">
    <property type="entry name" value="Acetate_kinase"/>
    <property type="match status" value="1"/>
</dbReference>
<dbReference type="InterPro" id="IPR004372">
    <property type="entry name" value="Ac/propionate_kinase"/>
</dbReference>
<dbReference type="InterPro" id="IPR000890">
    <property type="entry name" value="Aliphatic_acid_kin_short-chain"/>
</dbReference>
<dbReference type="InterPro" id="IPR023865">
    <property type="entry name" value="Aliphatic_acid_kinase_CS"/>
</dbReference>
<dbReference type="InterPro" id="IPR043129">
    <property type="entry name" value="ATPase_NBD"/>
</dbReference>
<dbReference type="NCBIfam" id="TIGR00016">
    <property type="entry name" value="ackA"/>
    <property type="match status" value="1"/>
</dbReference>
<dbReference type="PANTHER" id="PTHR21060">
    <property type="entry name" value="ACETATE KINASE"/>
    <property type="match status" value="1"/>
</dbReference>
<dbReference type="PANTHER" id="PTHR21060:SF21">
    <property type="entry name" value="ACETATE KINASE"/>
    <property type="match status" value="1"/>
</dbReference>
<dbReference type="Pfam" id="PF00871">
    <property type="entry name" value="Acetate_kinase"/>
    <property type="match status" value="1"/>
</dbReference>
<dbReference type="PIRSF" id="PIRSF000722">
    <property type="entry name" value="Acetate_prop_kin"/>
    <property type="match status" value="1"/>
</dbReference>
<dbReference type="PRINTS" id="PR00471">
    <property type="entry name" value="ACETATEKNASE"/>
</dbReference>
<dbReference type="SUPFAM" id="SSF53067">
    <property type="entry name" value="Actin-like ATPase domain"/>
    <property type="match status" value="2"/>
</dbReference>
<dbReference type="PROSITE" id="PS01075">
    <property type="entry name" value="ACETATE_KINASE_1"/>
    <property type="match status" value="1"/>
</dbReference>
<accession>Q6N143</accession>
<name>ACKA_RHOPA</name>
<feature type="chain" id="PRO_1000089991" description="Acetate kinase">
    <location>
        <begin position="1"/>
        <end position="398"/>
    </location>
</feature>
<feature type="active site" description="Proton donor/acceptor" evidence="1">
    <location>
        <position position="150"/>
    </location>
</feature>
<feature type="binding site" evidence="1">
    <location>
        <position position="9"/>
    </location>
    <ligand>
        <name>Mg(2+)</name>
        <dbReference type="ChEBI" id="CHEBI:18420"/>
    </ligand>
</feature>
<feature type="binding site" evidence="1">
    <location>
        <position position="16"/>
    </location>
    <ligand>
        <name>ATP</name>
        <dbReference type="ChEBI" id="CHEBI:30616"/>
    </ligand>
</feature>
<feature type="binding site" evidence="1">
    <location>
        <position position="93"/>
    </location>
    <ligand>
        <name>substrate</name>
    </ligand>
</feature>
<feature type="binding site" evidence="1">
    <location>
        <begin position="209"/>
        <end position="213"/>
    </location>
    <ligand>
        <name>ATP</name>
        <dbReference type="ChEBI" id="CHEBI:30616"/>
    </ligand>
</feature>
<feature type="binding site" evidence="1">
    <location>
        <begin position="284"/>
        <end position="286"/>
    </location>
    <ligand>
        <name>ATP</name>
        <dbReference type="ChEBI" id="CHEBI:30616"/>
    </ligand>
</feature>
<feature type="binding site" evidence="1">
    <location>
        <begin position="329"/>
        <end position="333"/>
    </location>
    <ligand>
        <name>ATP</name>
        <dbReference type="ChEBI" id="CHEBI:30616"/>
    </ligand>
</feature>
<feature type="binding site" evidence="1">
    <location>
        <position position="382"/>
    </location>
    <ligand>
        <name>Mg(2+)</name>
        <dbReference type="ChEBI" id="CHEBI:18420"/>
    </ligand>
</feature>
<feature type="site" description="Transition state stabilizer" evidence="1">
    <location>
        <position position="181"/>
    </location>
</feature>
<feature type="site" description="Transition state stabilizer" evidence="1">
    <location>
        <position position="242"/>
    </location>
</feature>
<sequence length="398" mass="42663">MSDVLLVLNAGSSSIKFALYEAHTEPTADHLICEGGIGSLGHRPHFKVVNSDGSTRYDTYLPEGTSHDDAMAVLIGWIETTFPEHRLSAVGHRVVHGGALFDGPVDVTPEVIAQLRAFDRLAPLHQPHNVSAIEALAKLHPSLPQIACFDTAFHHRLPEVATAFALPRELTEQGVRRYGFHGLSYEYIAGRLPDVAGQAVADGRVVVAHLGAGASMCAMLRCRSIATTMGFTALDGLMMGSRCGELDPGVVLYLLEEKSMTAREIEDLLYRESGLLGVSGISDDMRTLLASDDPHACEAIELFVYRIARELGSLAAALGGLDALVFTGGIGEHASEIRRRVCEQAAWLGVTLDPDANASLSGAGRISAPDSKVSAWAIPTDEDLMIARHVWRLADGGR</sequence>
<protein>
    <recommendedName>
        <fullName evidence="1">Acetate kinase</fullName>
        <ecNumber evidence="1">2.7.2.1</ecNumber>
    </recommendedName>
    <alternativeName>
        <fullName evidence="1">Acetokinase</fullName>
    </alternativeName>
</protein>
<organism>
    <name type="scientific">Rhodopseudomonas palustris (strain ATCC BAA-98 / CGA009)</name>
    <dbReference type="NCBI Taxonomy" id="258594"/>
    <lineage>
        <taxon>Bacteria</taxon>
        <taxon>Pseudomonadati</taxon>
        <taxon>Pseudomonadota</taxon>
        <taxon>Alphaproteobacteria</taxon>
        <taxon>Hyphomicrobiales</taxon>
        <taxon>Nitrobacteraceae</taxon>
        <taxon>Rhodopseudomonas</taxon>
    </lineage>
</organism>
<reference key="1">
    <citation type="journal article" date="2004" name="Nat. Biotechnol.">
        <title>Complete genome sequence of the metabolically versatile photosynthetic bacterium Rhodopseudomonas palustris.</title>
        <authorList>
            <person name="Larimer F.W."/>
            <person name="Chain P."/>
            <person name="Hauser L."/>
            <person name="Lamerdin J.E."/>
            <person name="Malfatti S."/>
            <person name="Do L."/>
            <person name="Land M.L."/>
            <person name="Pelletier D.A."/>
            <person name="Beatty J.T."/>
            <person name="Lang A.S."/>
            <person name="Tabita F.R."/>
            <person name="Gibson J.L."/>
            <person name="Hanson T.E."/>
            <person name="Bobst C."/>
            <person name="Torres y Torres J.L."/>
            <person name="Peres C."/>
            <person name="Harrison F.H."/>
            <person name="Gibson J."/>
            <person name="Harwood C.S."/>
        </authorList>
    </citation>
    <scope>NUCLEOTIDE SEQUENCE [LARGE SCALE GENOMIC DNA]</scope>
    <source>
        <strain>ATCC BAA-98 / CGA009</strain>
    </source>
</reference>
<proteinExistence type="inferred from homology"/>
<evidence type="ECO:0000255" key="1">
    <source>
        <dbReference type="HAMAP-Rule" id="MF_00020"/>
    </source>
</evidence>
<keyword id="KW-0067">ATP-binding</keyword>
<keyword id="KW-0963">Cytoplasm</keyword>
<keyword id="KW-0418">Kinase</keyword>
<keyword id="KW-0460">Magnesium</keyword>
<keyword id="KW-0479">Metal-binding</keyword>
<keyword id="KW-0547">Nucleotide-binding</keyword>
<keyword id="KW-0808">Transferase</keyword>
<gene>
    <name evidence="1" type="primary">ackA</name>
    <name type="ordered locus">RPA4566</name>
</gene>
<comment type="function">
    <text evidence="1">Catalyzes the formation of acetyl phosphate from acetate and ATP. Can also catalyze the reverse reaction.</text>
</comment>
<comment type="catalytic activity">
    <reaction evidence="1">
        <text>acetate + ATP = acetyl phosphate + ADP</text>
        <dbReference type="Rhea" id="RHEA:11352"/>
        <dbReference type="ChEBI" id="CHEBI:22191"/>
        <dbReference type="ChEBI" id="CHEBI:30089"/>
        <dbReference type="ChEBI" id="CHEBI:30616"/>
        <dbReference type="ChEBI" id="CHEBI:456216"/>
        <dbReference type="EC" id="2.7.2.1"/>
    </reaction>
</comment>
<comment type="cofactor">
    <cofactor evidence="1">
        <name>Mg(2+)</name>
        <dbReference type="ChEBI" id="CHEBI:18420"/>
    </cofactor>
    <cofactor evidence="1">
        <name>Mn(2+)</name>
        <dbReference type="ChEBI" id="CHEBI:29035"/>
    </cofactor>
    <text evidence="1">Mg(2+). Can also accept Mn(2+).</text>
</comment>
<comment type="pathway">
    <text evidence="1">Metabolic intermediate biosynthesis; acetyl-CoA biosynthesis; acetyl-CoA from acetate: step 1/2.</text>
</comment>
<comment type="subunit">
    <text evidence="1">Homodimer.</text>
</comment>
<comment type="subcellular location">
    <subcellularLocation>
        <location evidence="1">Cytoplasm</location>
    </subcellularLocation>
</comment>
<comment type="similarity">
    <text evidence="1">Belongs to the acetokinase family.</text>
</comment>